<name>MUTL_ECOLU</name>
<sequence>MPIQVLPPQLANQIAAGEVVERPASVVKELVENSLDAGATRIDIDIERGGAKLIRIRDNGCGIKKDELALALARHATSKIASLDDLEAIISLGFRGEALASISSVSRLTLTSRIAEQQEAWQAYAEGRDMDVTVKPAAHPVGTTLEVLDLFYNTPARRKFLRTEKTEFNHIDEIIRRIALARFDVTINLSHNGKIVRQYRAVPEGGQKERRLGAICGTAFLEQALAIEWQHGDLTLRGWVADPNHTTPALAEIQYCYVNGRMMRDRLINHAIRQACEDKLGADQQPAFVLYLEIDPHQVDVNVHPAKHEVRFHQSRLVHDFIYQGVLSVLQQQLETPLPLDDDPQPAPRAIPENRVAAGRNHFAEPAVREPVAPRYTPAPASGSRPAAPWPNAQPGYQKQQGEVYRQLLQTPAPMQKPKAPEPQEPALAANSQSFGRVLTIVHSDCALLERGGNISLLALPVAERWLRQAQLTPGEAPVCAQPLLIPLRLKVSGEEKSALEKAQSALAELGIDFQSDAQHVTIRAVPLPLRQQNLQILIPELIGYLAKQSVFEPGNIAQWIARNLMSEHAQWSMAQAITLLADVERLCPQLVKTPPGGLLQSVDLHPAIKALKDE</sequence>
<keyword id="KW-0227">DNA damage</keyword>
<keyword id="KW-0234">DNA repair</keyword>
<proteinExistence type="inferred from homology"/>
<feature type="chain" id="PRO_1000192174" description="DNA mismatch repair protein MutL">
    <location>
        <begin position="1"/>
        <end position="615"/>
    </location>
</feature>
<feature type="region of interest" description="Disordered" evidence="2">
    <location>
        <begin position="362"/>
        <end position="397"/>
    </location>
</feature>
<feature type="compositionally biased region" description="Low complexity" evidence="2">
    <location>
        <begin position="378"/>
        <end position="391"/>
    </location>
</feature>
<organism>
    <name type="scientific">Escherichia coli O17:K52:H18 (strain UMN026 / ExPEC)</name>
    <dbReference type="NCBI Taxonomy" id="585056"/>
    <lineage>
        <taxon>Bacteria</taxon>
        <taxon>Pseudomonadati</taxon>
        <taxon>Pseudomonadota</taxon>
        <taxon>Gammaproteobacteria</taxon>
        <taxon>Enterobacterales</taxon>
        <taxon>Enterobacteriaceae</taxon>
        <taxon>Escherichia</taxon>
    </lineage>
</organism>
<gene>
    <name evidence="1" type="primary">mutL</name>
    <name type="ordered locus">ECUMN_4703</name>
</gene>
<dbReference type="EMBL" id="CU928163">
    <property type="protein sequence ID" value="CAR15816.1"/>
    <property type="molecule type" value="Genomic_DNA"/>
</dbReference>
<dbReference type="RefSeq" id="WP_001122459.1">
    <property type="nucleotide sequence ID" value="NC_011751.1"/>
</dbReference>
<dbReference type="RefSeq" id="YP_002415300.1">
    <property type="nucleotide sequence ID" value="NC_011751.1"/>
</dbReference>
<dbReference type="SMR" id="B7NGA4"/>
<dbReference type="STRING" id="585056.ECUMN_4703"/>
<dbReference type="KEGG" id="eum:ECUMN_4703"/>
<dbReference type="PATRIC" id="fig|585056.7.peg.4866"/>
<dbReference type="HOGENOM" id="CLU_004131_5_1_6"/>
<dbReference type="Proteomes" id="UP000007097">
    <property type="component" value="Chromosome"/>
</dbReference>
<dbReference type="GO" id="GO:0032300">
    <property type="term" value="C:mismatch repair complex"/>
    <property type="evidence" value="ECO:0007669"/>
    <property type="project" value="InterPro"/>
</dbReference>
<dbReference type="GO" id="GO:0005524">
    <property type="term" value="F:ATP binding"/>
    <property type="evidence" value="ECO:0007669"/>
    <property type="project" value="InterPro"/>
</dbReference>
<dbReference type="GO" id="GO:0016887">
    <property type="term" value="F:ATP hydrolysis activity"/>
    <property type="evidence" value="ECO:0007669"/>
    <property type="project" value="InterPro"/>
</dbReference>
<dbReference type="GO" id="GO:0140664">
    <property type="term" value="F:ATP-dependent DNA damage sensor activity"/>
    <property type="evidence" value="ECO:0007669"/>
    <property type="project" value="InterPro"/>
</dbReference>
<dbReference type="GO" id="GO:0030983">
    <property type="term" value="F:mismatched DNA binding"/>
    <property type="evidence" value="ECO:0007669"/>
    <property type="project" value="InterPro"/>
</dbReference>
<dbReference type="GO" id="GO:0006298">
    <property type="term" value="P:mismatch repair"/>
    <property type="evidence" value="ECO:0007669"/>
    <property type="project" value="UniProtKB-UniRule"/>
</dbReference>
<dbReference type="CDD" id="cd16926">
    <property type="entry name" value="HATPase_MutL-MLH-PMS-like"/>
    <property type="match status" value="1"/>
</dbReference>
<dbReference type="CDD" id="cd03482">
    <property type="entry name" value="MutL_Trans_MutL"/>
    <property type="match status" value="1"/>
</dbReference>
<dbReference type="FunFam" id="3.30.230.10:FF:000013">
    <property type="entry name" value="DNA mismatch repair endonuclease MutL"/>
    <property type="match status" value="1"/>
</dbReference>
<dbReference type="FunFam" id="3.30.565.10:FF:000003">
    <property type="entry name" value="DNA mismatch repair endonuclease MutL"/>
    <property type="match status" value="1"/>
</dbReference>
<dbReference type="FunFam" id="3.30.1370.100:FF:000002">
    <property type="entry name" value="DNA mismatch repair protein MutL"/>
    <property type="match status" value="1"/>
</dbReference>
<dbReference type="Gene3D" id="3.30.230.10">
    <property type="match status" value="1"/>
</dbReference>
<dbReference type="Gene3D" id="3.30.565.10">
    <property type="entry name" value="Histidine kinase-like ATPase, C-terminal domain"/>
    <property type="match status" value="1"/>
</dbReference>
<dbReference type="Gene3D" id="3.30.1540.20">
    <property type="entry name" value="MutL, C-terminal domain, dimerisation subdomain"/>
    <property type="match status" value="1"/>
</dbReference>
<dbReference type="Gene3D" id="3.30.1370.100">
    <property type="entry name" value="MutL, C-terminal domain, regulatory subdomain"/>
    <property type="match status" value="1"/>
</dbReference>
<dbReference type="HAMAP" id="MF_00149">
    <property type="entry name" value="DNA_mis_repair"/>
    <property type="match status" value="1"/>
</dbReference>
<dbReference type="InterPro" id="IPR014762">
    <property type="entry name" value="DNA_mismatch_repair_CS"/>
</dbReference>
<dbReference type="InterPro" id="IPR020667">
    <property type="entry name" value="DNA_mismatch_repair_MutL"/>
</dbReference>
<dbReference type="InterPro" id="IPR013507">
    <property type="entry name" value="DNA_mismatch_S5_2-like"/>
</dbReference>
<dbReference type="InterPro" id="IPR036890">
    <property type="entry name" value="HATPase_C_sf"/>
</dbReference>
<dbReference type="InterPro" id="IPR002099">
    <property type="entry name" value="MutL/Mlh/PMS"/>
</dbReference>
<dbReference type="InterPro" id="IPR038973">
    <property type="entry name" value="MutL/Mlh/Pms-like"/>
</dbReference>
<dbReference type="InterPro" id="IPR014790">
    <property type="entry name" value="MutL_C"/>
</dbReference>
<dbReference type="InterPro" id="IPR042120">
    <property type="entry name" value="MutL_C_dimsub"/>
</dbReference>
<dbReference type="InterPro" id="IPR042121">
    <property type="entry name" value="MutL_C_regsub"/>
</dbReference>
<dbReference type="InterPro" id="IPR037198">
    <property type="entry name" value="MutL_C_sf"/>
</dbReference>
<dbReference type="InterPro" id="IPR020568">
    <property type="entry name" value="Ribosomal_Su5_D2-typ_SF"/>
</dbReference>
<dbReference type="InterPro" id="IPR014721">
    <property type="entry name" value="Ribsml_uS5_D2-typ_fold_subgr"/>
</dbReference>
<dbReference type="NCBIfam" id="TIGR00585">
    <property type="entry name" value="mutl"/>
    <property type="match status" value="1"/>
</dbReference>
<dbReference type="NCBIfam" id="NF000948">
    <property type="entry name" value="PRK00095.1-1"/>
    <property type="match status" value="1"/>
</dbReference>
<dbReference type="PANTHER" id="PTHR10073">
    <property type="entry name" value="DNA MISMATCH REPAIR PROTEIN MLH, PMS, MUTL"/>
    <property type="match status" value="1"/>
</dbReference>
<dbReference type="PANTHER" id="PTHR10073:SF12">
    <property type="entry name" value="DNA MISMATCH REPAIR PROTEIN MLH1"/>
    <property type="match status" value="1"/>
</dbReference>
<dbReference type="Pfam" id="PF01119">
    <property type="entry name" value="DNA_mis_repair"/>
    <property type="match status" value="1"/>
</dbReference>
<dbReference type="Pfam" id="PF13589">
    <property type="entry name" value="HATPase_c_3"/>
    <property type="match status" value="1"/>
</dbReference>
<dbReference type="Pfam" id="PF08676">
    <property type="entry name" value="MutL_C"/>
    <property type="match status" value="1"/>
</dbReference>
<dbReference type="SMART" id="SM01340">
    <property type="entry name" value="DNA_mis_repair"/>
    <property type="match status" value="1"/>
</dbReference>
<dbReference type="SMART" id="SM00853">
    <property type="entry name" value="MutL_C"/>
    <property type="match status" value="1"/>
</dbReference>
<dbReference type="SUPFAM" id="SSF55874">
    <property type="entry name" value="ATPase domain of HSP90 chaperone/DNA topoisomerase II/histidine kinase"/>
    <property type="match status" value="1"/>
</dbReference>
<dbReference type="SUPFAM" id="SSF118116">
    <property type="entry name" value="DNA mismatch repair protein MutL"/>
    <property type="match status" value="1"/>
</dbReference>
<dbReference type="SUPFAM" id="SSF54211">
    <property type="entry name" value="Ribosomal protein S5 domain 2-like"/>
    <property type="match status" value="1"/>
</dbReference>
<dbReference type="PROSITE" id="PS00058">
    <property type="entry name" value="DNA_MISMATCH_REPAIR_1"/>
    <property type="match status" value="1"/>
</dbReference>
<evidence type="ECO:0000255" key="1">
    <source>
        <dbReference type="HAMAP-Rule" id="MF_00149"/>
    </source>
</evidence>
<evidence type="ECO:0000256" key="2">
    <source>
        <dbReference type="SAM" id="MobiDB-lite"/>
    </source>
</evidence>
<reference key="1">
    <citation type="journal article" date="2009" name="PLoS Genet.">
        <title>Organised genome dynamics in the Escherichia coli species results in highly diverse adaptive paths.</title>
        <authorList>
            <person name="Touchon M."/>
            <person name="Hoede C."/>
            <person name="Tenaillon O."/>
            <person name="Barbe V."/>
            <person name="Baeriswyl S."/>
            <person name="Bidet P."/>
            <person name="Bingen E."/>
            <person name="Bonacorsi S."/>
            <person name="Bouchier C."/>
            <person name="Bouvet O."/>
            <person name="Calteau A."/>
            <person name="Chiapello H."/>
            <person name="Clermont O."/>
            <person name="Cruveiller S."/>
            <person name="Danchin A."/>
            <person name="Diard M."/>
            <person name="Dossat C."/>
            <person name="Karoui M.E."/>
            <person name="Frapy E."/>
            <person name="Garry L."/>
            <person name="Ghigo J.M."/>
            <person name="Gilles A.M."/>
            <person name="Johnson J."/>
            <person name="Le Bouguenec C."/>
            <person name="Lescat M."/>
            <person name="Mangenot S."/>
            <person name="Martinez-Jehanne V."/>
            <person name="Matic I."/>
            <person name="Nassif X."/>
            <person name="Oztas S."/>
            <person name="Petit M.A."/>
            <person name="Pichon C."/>
            <person name="Rouy Z."/>
            <person name="Ruf C.S."/>
            <person name="Schneider D."/>
            <person name="Tourret J."/>
            <person name="Vacherie B."/>
            <person name="Vallenet D."/>
            <person name="Medigue C."/>
            <person name="Rocha E.P.C."/>
            <person name="Denamur E."/>
        </authorList>
    </citation>
    <scope>NUCLEOTIDE SEQUENCE [LARGE SCALE GENOMIC DNA]</scope>
    <source>
        <strain>UMN026 / ExPEC</strain>
    </source>
</reference>
<protein>
    <recommendedName>
        <fullName evidence="1">DNA mismatch repair protein MutL</fullName>
    </recommendedName>
</protein>
<comment type="function">
    <text evidence="1">This protein is involved in the repair of mismatches in DNA. It is required for dam-dependent methyl-directed DNA mismatch repair. May act as a 'molecular matchmaker', a protein that promotes the formation of a stable complex between two or more DNA-binding proteins in an ATP-dependent manner without itself being part of a final effector complex.</text>
</comment>
<comment type="similarity">
    <text evidence="1">Belongs to the DNA mismatch repair MutL/HexB family.</text>
</comment>
<accession>B7NGA4</accession>